<comment type="subcellular location">
    <subcellularLocation>
        <location>Cell inner membrane</location>
        <topology>Multi-pass membrane protein</topology>
    </subcellularLocation>
</comment>
<comment type="similarity">
    <text evidence="2">Belongs to the major facilitator superfamily.</text>
</comment>
<comment type="sequence caution" evidence="2">
    <conflict type="erroneous initiation">
        <sequence resource="EMBL-CDS" id="AAB40183"/>
    </conflict>
    <text>Extended N-terminus.</text>
</comment>
<name>YAJR_ECOLI</name>
<sequence length="454" mass="48810">MNDYKMTPGERRATWGLGTVFSLRMLGMFMVLPVLTTYGMALQGASEALIGIAIGIYGLTQAVFQIPFGLLSDRIGRKPLIVGGLAVFAAGSVIAALSDSIWGIILGRALQGSGAIAAAVMALLSDLTREQNRTKAMAFIGVSFGITFAIAMVLGPIITHKLGLHALFWMIAILATTGIALTIWVVPNSSTHVLNRESGMVKGSFSKVLAEPRLLKLNFGIMCLHILLMSTFVALPGQLADAGFPAAEHWKVYLATMLIAFGSVVPFIIYAEVKRKMKQVFVFCVGLIVVAEIVLWNAQTQFWQLVVGVQLFFVAFNLMEALLPSLISKESPAGYKGTAMGVYSTSQFLGVAIGGSLGGWINGMFDGQGVFLAGAMLAAVWLTVASTMKEPPYVSSLRIEIPANIAANEALKVRLLETEGIKEVLIAEEEHSAYVKIDSKVTNRFEIEQAIRQA</sequence>
<proteinExistence type="evidence at protein level"/>
<reference key="1">
    <citation type="submission" date="1997-01" db="EMBL/GenBank/DDBJ databases">
        <title>Sequence of minutes 4-25 of Escherichia coli.</title>
        <authorList>
            <person name="Chung E."/>
            <person name="Allen E."/>
            <person name="Araujo R."/>
            <person name="Aparicio A.M."/>
            <person name="Davis K."/>
            <person name="Duncan M."/>
            <person name="Federspiel N."/>
            <person name="Hyman R."/>
            <person name="Kalman S."/>
            <person name="Komp C."/>
            <person name="Kurdi O."/>
            <person name="Lew H."/>
            <person name="Lin D."/>
            <person name="Namath A."/>
            <person name="Oefner P."/>
            <person name="Roberts D."/>
            <person name="Schramm S."/>
            <person name="Davis R.W."/>
        </authorList>
    </citation>
    <scope>NUCLEOTIDE SEQUENCE [LARGE SCALE GENOMIC DNA]</scope>
    <source>
        <strain>K12 / MG1655 / ATCC 47076</strain>
    </source>
</reference>
<reference key="2">
    <citation type="journal article" date="1997" name="Science">
        <title>The complete genome sequence of Escherichia coli K-12.</title>
        <authorList>
            <person name="Blattner F.R."/>
            <person name="Plunkett G. III"/>
            <person name="Bloch C.A."/>
            <person name="Perna N.T."/>
            <person name="Burland V."/>
            <person name="Riley M."/>
            <person name="Collado-Vides J."/>
            <person name="Glasner J.D."/>
            <person name="Rode C.K."/>
            <person name="Mayhew G.F."/>
            <person name="Gregor J."/>
            <person name="Davis N.W."/>
            <person name="Kirkpatrick H.A."/>
            <person name="Goeden M.A."/>
            <person name="Rose D.J."/>
            <person name="Mau B."/>
            <person name="Shao Y."/>
        </authorList>
    </citation>
    <scope>NUCLEOTIDE SEQUENCE [LARGE SCALE GENOMIC DNA]</scope>
    <source>
        <strain>K12 / MG1655 / ATCC 47076</strain>
    </source>
</reference>
<reference key="3">
    <citation type="journal article" date="2006" name="Mol. Syst. Biol.">
        <title>Highly accurate genome sequences of Escherichia coli K-12 strains MG1655 and W3110.</title>
        <authorList>
            <person name="Hayashi K."/>
            <person name="Morooka N."/>
            <person name="Yamamoto Y."/>
            <person name="Fujita K."/>
            <person name="Isono K."/>
            <person name="Choi S."/>
            <person name="Ohtsubo E."/>
            <person name="Baba T."/>
            <person name="Wanner B.L."/>
            <person name="Mori H."/>
            <person name="Horiuchi T."/>
        </authorList>
    </citation>
    <scope>NUCLEOTIDE SEQUENCE [LARGE SCALE GENOMIC DNA]</scope>
    <source>
        <strain>K12 / W3110 / ATCC 27325 / DSM 5911</strain>
    </source>
</reference>
<reference key="4">
    <citation type="journal article" date="2005" name="Science">
        <title>Global topology analysis of the Escherichia coli inner membrane proteome.</title>
        <authorList>
            <person name="Daley D.O."/>
            <person name="Rapp M."/>
            <person name="Granseth E."/>
            <person name="Melen K."/>
            <person name="Drew D."/>
            <person name="von Heijne G."/>
        </authorList>
    </citation>
    <scope>TOPOLOGY [LARGE SCALE ANALYSIS]</scope>
    <source>
        <strain>K12 / MG1655 / ATCC 47076</strain>
    </source>
</reference>
<keyword id="KW-0997">Cell inner membrane</keyword>
<keyword id="KW-1003">Cell membrane</keyword>
<keyword id="KW-0472">Membrane</keyword>
<keyword id="KW-1185">Reference proteome</keyword>
<keyword id="KW-0812">Transmembrane</keyword>
<keyword id="KW-1133">Transmembrane helix</keyword>
<keyword id="KW-0813">Transport</keyword>
<evidence type="ECO:0000255" key="1"/>
<evidence type="ECO:0000305" key="2"/>
<protein>
    <recommendedName>
        <fullName>Inner membrane transport protein YajR</fullName>
    </recommendedName>
</protein>
<organism>
    <name type="scientific">Escherichia coli (strain K12)</name>
    <dbReference type="NCBI Taxonomy" id="83333"/>
    <lineage>
        <taxon>Bacteria</taxon>
        <taxon>Pseudomonadati</taxon>
        <taxon>Pseudomonadota</taxon>
        <taxon>Gammaproteobacteria</taxon>
        <taxon>Enterobacterales</taxon>
        <taxon>Enterobacteriaceae</taxon>
        <taxon>Escherichia</taxon>
    </lineage>
</organism>
<dbReference type="EMBL" id="U82664">
    <property type="protein sequence ID" value="AAB40183.1"/>
    <property type="status" value="ALT_INIT"/>
    <property type="molecule type" value="Genomic_DNA"/>
</dbReference>
<dbReference type="EMBL" id="U00096">
    <property type="protein sequence ID" value="AAC73530.2"/>
    <property type="molecule type" value="Genomic_DNA"/>
</dbReference>
<dbReference type="EMBL" id="AP009048">
    <property type="protein sequence ID" value="BAE76207.1"/>
    <property type="molecule type" value="Genomic_DNA"/>
</dbReference>
<dbReference type="PIR" id="C64772">
    <property type="entry name" value="C64772"/>
</dbReference>
<dbReference type="RefSeq" id="NP_414961.4">
    <property type="nucleotide sequence ID" value="NC_000913.3"/>
</dbReference>
<dbReference type="RefSeq" id="WP_001000963.1">
    <property type="nucleotide sequence ID" value="NZ_SSZK01000009.1"/>
</dbReference>
<dbReference type="SMR" id="P77726"/>
<dbReference type="BioGRID" id="4263068">
    <property type="interactions" value="183"/>
</dbReference>
<dbReference type="FunCoup" id="P77726">
    <property type="interactions" value="184"/>
</dbReference>
<dbReference type="STRING" id="511145.b0427"/>
<dbReference type="TCDB" id="2.A.1.2.60">
    <property type="family name" value="the major facilitator superfamily (mfs)"/>
</dbReference>
<dbReference type="PaxDb" id="511145-b0427"/>
<dbReference type="EnsemblBacteria" id="AAC73530">
    <property type="protein sequence ID" value="AAC73530"/>
    <property type="gene ID" value="b0427"/>
</dbReference>
<dbReference type="GeneID" id="945058"/>
<dbReference type="KEGG" id="ecj:JW5059"/>
<dbReference type="KEGG" id="eco:b0427"/>
<dbReference type="KEGG" id="ecoc:C3026_02085"/>
<dbReference type="PATRIC" id="fig|1411691.4.peg.1850"/>
<dbReference type="EchoBASE" id="EB3380"/>
<dbReference type="eggNOG" id="COG2814">
    <property type="taxonomic scope" value="Bacteria"/>
</dbReference>
<dbReference type="HOGENOM" id="CLU_001265_10_0_6"/>
<dbReference type="InParanoid" id="P77726"/>
<dbReference type="OMA" id="TYGMDLA"/>
<dbReference type="OrthoDB" id="9764259at2"/>
<dbReference type="PhylomeDB" id="P77726"/>
<dbReference type="BioCyc" id="EcoCyc:B0427-MONOMER"/>
<dbReference type="PRO" id="PR:P77726"/>
<dbReference type="Proteomes" id="UP000000625">
    <property type="component" value="Chromosome"/>
</dbReference>
<dbReference type="GO" id="GO:0016020">
    <property type="term" value="C:membrane"/>
    <property type="evidence" value="ECO:0000318"/>
    <property type="project" value="GO_Central"/>
</dbReference>
<dbReference type="GO" id="GO:0005886">
    <property type="term" value="C:plasma membrane"/>
    <property type="evidence" value="ECO:0000314"/>
    <property type="project" value="EcoCyc"/>
</dbReference>
<dbReference type="GO" id="GO:0022857">
    <property type="term" value="F:transmembrane transporter activity"/>
    <property type="evidence" value="ECO:0000318"/>
    <property type="project" value="GO_Central"/>
</dbReference>
<dbReference type="GO" id="GO:0055085">
    <property type="term" value="P:transmembrane transport"/>
    <property type="evidence" value="ECO:0000255"/>
    <property type="project" value="EcoCyc"/>
</dbReference>
<dbReference type="CDD" id="cd17472">
    <property type="entry name" value="MFS_YajR_like"/>
    <property type="match status" value="1"/>
</dbReference>
<dbReference type="FunFam" id="1.20.1250.20:FF:000240">
    <property type="entry name" value="Transporter, major facilitator family"/>
    <property type="match status" value="1"/>
</dbReference>
<dbReference type="Gene3D" id="3.30.70.100">
    <property type="match status" value="1"/>
</dbReference>
<dbReference type="Gene3D" id="1.20.1250.20">
    <property type="entry name" value="MFS general substrate transporter like domains"/>
    <property type="match status" value="1"/>
</dbReference>
<dbReference type="InterPro" id="IPR011701">
    <property type="entry name" value="MFS"/>
</dbReference>
<dbReference type="InterPro" id="IPR020846">
    <property type="entry name" value="MFS_dom"/>
</dbReference>
<dbReference type="InterPro" id="IPR036259">
    <property type="entry name" value="MFS_trans_sf"/>
</dbReference>
<dbReference type="InterPro" id="IPR050171">
    <property type="entry name" value="MFS_Transporters"/>
</dbReference>
<dbReference type="InterPro" id="IPR054152">
    <property type="entry name" value="YajR_YAM"/>
</dbReference>
<dbReference type="PANTHER" id="PTHR23517:SF2">
    <property type="entry name" value="MULTIDRUG RESISTANCE PROTEIN MDTH"/>
    <property type="match status" value="1"/>
</dbReference>
<dbReference type="PANTHER" id="PTHR23517">
    <property type="entry name" value="RESISTANCE PROTEIN MDTM, PUTATIVE-RELATED-RELATED"/>
    <property type="match status" value="1"/>
</dbReference>
<dbReference type="Pfam" id="PF07690">
    <property type="entry name" value="MFS_1"/>
    <property type="match status" value="1"/>
</dbReference>
<dbReference type="Pfam" id="PF21987">
    <property type="entry name" value="YajR_YAM"/>
    <property type="match status" value="1"/>
</dbReference>
<dbReference type="SUPFAM" id="SSF103473">
    <property type="entry name" value="MFS general substrate transporter"/>
    <property type="match status" value="1"/>
</dbReference>
<dbReference type="PROSITE" id="PS50850">
    <property type="entry name" value="MFS"/>
    <property type="match status" value="1"/>
</dbReference>
<feature type="chain" id="PRO_0000173400" description="Inner membrane transport protein YajR">
    <location>
        <begin position="1"/>
        <end position="454"/>
    </location>
</feature>
<feature type="topological domain" description="Periplasmic" evidence="1">
    <location>
        <begin position="1"/>
        <end position="14"/>
    </location>
</feature>
<feature type="transmembrane region" description="Helical" evidence="1">
    <location>
        <begin position="15"/>
        <end position="35"/>
    </location>
</feature>
<feature type="topological domain" description="Cytoplasmic" evidence="1">
    <location>
        <begin position="36"/>
        <end position="47"/>
    </location>
</feature>
<feature type="transmembrane region" description="Helical" evidence="1">
    <location>
        <begin position="48"/>
        <end position="68"/>
    </location>
</feature>
<feature type="topological domain" description="Periplasmic" evidence="1">
    <location>
        <begin position="69"/>
        <end position="84"/>
    </location>
</feature>
<feature type="transmembrane region" description="Helical" evidence="1">
    <location>
        <begin position="85"/>
        <end position="105"/>
    </location>
</feature>
<feature type="topological domain" description="Cytoplasmic" evidence="1">
    <location>
        <begin position="106"/>
        <end position="137"/>
    </location>
</feature>
<feature type="transmembrane region" description="Helical" evidence="1">
    <location>
        <begin position="138"/>
        <end position="158"/>
    </location>
</feature>
<feature type="topological domain" description="Periplasmic" evidence="1">
    <location>
        <begin position="159"/>
        <end position="165"/>
    </location>
</feature>
<feature type="transmembrane region" description="Helical" evidence="1">
    <location>
        <begin position="166"/>
        <end position="186"/>
    </location>
</feature>
<feature type="topological domain" description="Cytoplasmic" evidence="1">
    <location>
        <begin position="187"/>
        <end position="216"/>
    </location>
</feature>
<feature type="transmembrane region" description="Helical" evidence="1">
    <location>
        <begin position="217"/>
        <end position="237"/>
    </location>
</feature>
<feature type="topological domain" description="Periplasmic" evidence="1">
    <location>
        <begin position="238"/>
        <end position="252"/>
    </location>
</feature>
<feature type="transmembrane region" description="Helical" evidence="1">
    <location>
        <begin position="253"/>
        <end position="273"/>
    </location>
</feature>
<feature type="topological domain" description="Cytoplasmic" evidence="1">
    <location>
        <begin position="274"/>
        <end position="279"/>
    </location>
</feature>
<feature type="transmembrane region" description="Helical" evidence="1">
    <location>
        <begin position="280"/>
        <end position="300"/>
    </location>
</feature>
<feature type="topological domain" description="Periplasmic" evidence="1">
    <location>
        <begin position="301"/>
        <end position="306"/>
    </location>
</feature>
<feature type="transmembrane region" description="Helical" evidence="1">
    <location>
        <begin position="307"/>
        <end position="327"/>
    </location>
</feature>
<feature type="topological domain" description="Cytoplasmic" evidence="1">
    <location>
        <begin position="328"/>
        <end position="340"/>
    </location>
</feature>
<feature type="transmembrane region" description="Helical" evidence="1">
    <location>
        <begin position="341"/>
        <end position="361"/>
    </location>
</feature>
<feature type="topological domain" description="Periplasmic" evidence="1">
    <location>
        <begin position="362"/>
        <end position="363"/>
    </location>
</feature>
<feature type="transmembrane region" description="Helical" evidence="1">
    <location>
        <begin position="364"/>
        <end position="384"/>
    </location>
</feature>
<feature type="topological domain" description="Cytoplasmic" evidence="1">
    <location>
        <begin position="385"/>
        <end position="454"/>
    </location>
</feature>
<accession>P77726</accession>
<accession>Q2MBZ9</accession>
<gene>
    <name type="primary">yajR</name>
    <name type="ordered locus">b0427</name>
    <name type="ordered locus">JW5059</name>
</gene>